<proteinExistence type="evidence at transcript level"/>
<evidence type="ECO:0000250" key="1"/>
<evidence type="ECO:0000250" key="2">
    <source>
        <dbReference type="UniProtKB" id="P11511"/>
    </source>
</evidence>
<evidence type="ECO:0000305" key="3"/>
<gene>
    <name type="primary">cyp19a1</name>
    <name type="synonym">cyp19</name>
</gene>
<organism>
    <name type="scientific">Ictalurus punctatus</name>
    <name type="common">Channel catfish</name>
    <name type="synonym">Silurus punctatus</name>
    <dbReference type="NCBI Taxonomy" id="7998"/>
    <lineage>
        <taxon>Eukaryota</taxon>
        <taxon>Metazoa</taxon>
        <taxon>Chordata</taxon>
        <taxon>Craniata</taxon>
        <taxon>Vertebrata</taxon>
        <taxon>Euteleostomi</taxon>
        <taxon>Actinopterygii</taxon>
        <taxon>Neopterygii</taxon>
        <taxon>Teleostei</taxon>
        <taxon>Ostariophysi</taxon>
        <taxon>Siluriformes</taxon>
        <taxon>Ictaluridae</taxon>
        <taxon>Ictalurus</taxon>
    </lineage>
</organism>
<keyword id="KW-0349">Heme</keyword>
<keyword id="KW-0408">Iron</keyword>
<keyword id="KW-0443">Lipid metabolism</keyword>
<keyword id="KW-0472">Membrane</keyword>
<keyword id="KW-0479">Metal-binding</keyword>
<keyword id="KW-0503">Monooxygenase</keyword>
<keyword id="KW-0560">Oxidoreductase</keyword>
<comment type="function">
    <text>Catalyzes the formation of aromatic C18 estrogens from C19 androgens.</text>
</comment>
<comment type="catalytic activity">
    <reaction evidence="2">
        <text>testosterone + 3 reduced [NADPH--hemoprotein reductase] + 3 O2 = 17beta-estradiol + formate + 3 oxidized [NADPH--hemoprotein reductase] + 4 H2O + 4 H(+)</text>
        <dbReference type="Rhea" id="RHEA:38191"/>
        <dbReference type="Rhea" id="RHEA-COMP:11964"/>
        <dbReference type="Rhea" id="RHEA-COMP:11965"/>
        <dbReference type="ChEBI" id="CHEBI:15377"/>
        <dbReference type="ChEBI" id="CHEBI:15378"/>
        <dbReference type="ChEBI" id="CHEBI:15379"/>
        <dbReference type="ChEBI" id="CHEBI:15740"/>
        <dbReference type="ChEBI" id="CHEBI:16469"/>
        <dbReference type="ChEBI" id="CHEBI:17347"/>
        <dbReference type="ChEBI" id="CHEBI:57618"/>
        <dbReference type="ChEBI" id="CHEBI:58210"/>
        <dbReference type="EC" id="1.14.14.14"/>
    </reaction>
</comment>
<comment type="catalytic activity">
    <reaction evidence="2">
        <text>androst-4-ene-3,17-dione + 3 reduced [NADPH--hemoprotein reductase] + 3 O2 = estrone + formate + 3 oxidized [NADPH--hemoprotein reductase] + 4 H2O + 4 H(+)</text>
        <dbReference type="Rhea" id="RHEA:38195"/>
        <dbReference type="Rhea" id="RHEA-COMP:11964"/>
        <dbReference type="Rhea" id="RHEA-COMP:11965"/>
        <dbReference type="ChEBI" id="CHEBI:15377"/>
        <dbReference type="ChEBI" id="CHEBI:15378"/>
        <dbReference type="ChEBI" id="CHEBI:15379"/>
        <dbReference type="ChEBI" id="CHEBI:15740"/>
        <dbReference type="ChEBI" id="CHEBI:16422"/>
        <dbReference type="ChEBI" id="CHEBI:17263"/>
        <dbReference type="ChEBI" id="CHEBI:57618"/>
        <dbReference type="ChEBI" id="CHEBI:58210"/>
        <dbReference type="EC" id="1.14.14.14"/>
    </reaction>
</comment>
<comment type="cofactor">
    <cofactor evidence="1">
        <name>heme</name>
        <dbReference type="ChEBI" id="CHEBI:30413"/>
    </cofactor>
</comment>
<comment type="subcellular location">
    <subcellularLocation>
        <location>Membrane</location>
        <topology>Peripheral membrane protein</topology>
    </subcellularLocation>
</comment>
<comment type="similarity">
    <text evidence="3">Belongs to the cytochrome P450 family.</text>
</comment>
<comment type="caution">
    <text evidence="3">It is uncertain whether Met-1, Met-8 or Met-23 is the initiator.</text>
</comment>
<feature type="chain" id="PRO_0000051970" description="Aromatase">
    <location>
        <begin position="1"/>
        <end position="524"/>
    </location>
</feature>
<feature type="binding site" description="axial binding residue" evidence="1">
    <location>
        <position position="457"/>
    </location>
    <ligand>
        <name>heme</name>
        <dbReference type="ChEBI" id="CHEBI:30413"/>
    </ligand>
    <ligandPart>
        <name>Fe</name>
        <dbReference type="ChEBI" id="CHEBI:18248"/>
    </ligandPart>
</feature>
<reference key="1">
    <citation type="journal article" date="1994" name="Gen. Comp. Endocrinol.">
        <title>Isolation and characterization of the cDNA encoding the channel catfish (Ictalurus punctatus) form of cytochrome P450arom.</title>
        <authorList>
            <person name="Trant J.M."/>
        </authorList>
    </citation>
    <scope>NUCLEOTIDE SEQUENCE [MRNA]</scope>
    <source>
        <tissue>Ovary</tissue>
    </source>
</reference>
<dbReference type="EC" id="1.14.14.14" evidence="2"/>
<dbReference type="EMBL" id="S75715">
    <property type="protein sequence ID" value="AAB32613.1"/>
    <property type="molecule type" value="mRNA"/>
</dbReference>
<dbReference type="PIR" id="I51268">
    <property type="entry name" value="I51268"/>
</dbReference>
<dbReference type="RefSeq" id="NP_001316189.1">
    <property type="nucleotide sequence ID" value="NM_001329260.1"/>
</dbReference>
<dbReference type="SMR" id="Q92111"/>
<dbReference type="STRING" id="7998.ENSIPUP00000026178"/>
<dbReference type="GeneID" id="108264511"/>
<dbReference type="KEGG" id="ipu:108264511"/>
<dbReference type="OrthoDB" id="1470350at2759"/>
<dbReference type="Proteomes" id="UP000221080">
    <property type="component" value="Chromosome 4"/>
</dbReference>
<dbReference type="GO" id="GO:0005783">
    <property type="term" value="C:endoplasmic reticulum"/>
    <property type="evidence" value="ECO:0007669"/>
    <property type="project" value="TreeGrafter"/>
</dbReference>
<dbReference type="GO" id="GO:0016020">
    <property type="term" value="C:membrane"/>
    <property type="evidence" value="ECO:0007669"/>
    <property type="project" value="UniProtKB-SubCell"/>
</dbReference>
<dbReference type="GO" id="GO:0070330">
    <property type="term" value="F:aromatase activity"/>
    <property type="evidence" value="ECO:0007669"/>
    <property type="project" value="UniProtKB-EC"/>
</dbReference>
<dbReference type="GO" id="GO:0020037">
    <property type="term" value="F:heme binding"/>
    <property type="evidence" value="ECO:0007669"/>
    <property type="project" value="InterPro"/>
</dbReference>
<dbReference type="GO" id="GO:0005506">
    <property type="term" value="F:iron ion binding"/>
    <property type="evidence" value="ECO:0007669"/>
    <property type="project" value="InterPro"/>
</dbReference>
<dbReference type="GO" id="GO:0008585">
    <property type="term" value="P:female gonad development"/>
    <property type="evidence" value="ECO:0007669"/>
    <property type="project" value="TreeGrafter"/>
</dbReference>
<dbReference type="GO" id="GO:0006629">
    <property type="term" value="P:lipid metabolic process"/>
    <property type="evidence" value="ECO:0007669"/>
    <property type="project" value="UniProtKB-KW"/>
</dbReference>
<dbReference type="GO" id="GO:0032355">
    <property type="term" value="P:response to estradiol"/>
    <property type="evidence" value="ECO:0007669"/>
    <property type="project" value="TreeGrafter"/>
</dbReference>
<dbReference type="CDD" id="cd20616">
    <property type="entry name" value="CYP19A1"/>
    <property type="match status" value="1"/>
</dbReference>
<dbReference type="FunFam" id="1.10.630.10:FF:000032">
    <property type="entry name" value="Cytochrome P450 aromatase"/>
    <property type="match status" value="1"/>
</dbReference>
<dbReference type="Gene3D" id="1.10.630.10">
    <property type="entry name" value="Cytochrome P450"/>
    <property type="match status" value="1"/>
</dbReference>
<dbReference type="InterPro" id="IPR001128">
    <property type="entry name" value="Cyt_P450"/>
</dbReference>
<dbReference type="InterPro" id="IPR017972">
    <property type="entry name" value="Cyt_P450_CS"/>
</dbReference>
<dbReference type="InterPro" id="IPR002401">
    <property type="entry name" value="Cyt_P450_E_grp-I"/>
</dbReference>
<dbReference type="InterPro" id="IPR036396">
    <property type="entry name" value="Cyt_P450_sf"/>
</dbReference>
<dbReference type="InterPro" id="IPR050196">
    <property type="entry name" value="Cytochrome_P450_Monoox"/>
</dbReference>
<dbReference type="PANTHER" id="PTHR24291:SF204">
    <property type="entry name" value="AROMATASE"/>
    <property type="match status" value="1"/>
</dbReference>
<dbReference type="PANTHER" id="PTHR24291">
    <property type="entry name" value="CYTOCHROME P450 FAMILY 4"/>
    <property type="match status" value="1"/>
</dbReference>
<dbReference type="Pfam" id="PF00067">
    <property type="entry name" value="p450"/>
    <property type="match status" value="1"/>
</dbReference>
<dbReference type="PRINTS" id="PR00463">
    <property type="entry name" value="EP450I"/>
</dbReference>
<dbReference type="PRINTS" id="PR00385">
    <property type="entry name" value="P450"/>
</dbReference>
<dbReference type="SUPFAM" id="SSF48264">
    <property type="entry name" value="Cytochrome P450"/>
    <property type="match status" value="1"/>
</dbReference>
<dbReference type="PROSITE" id="PS00086">
    <property type="entry name" value="CYTOCHROME_P450"/>
    <property type="match status" value="1"/>
</dbReference>
<name>CP19A_ICTPU</name>
<protein>
    <recommendedName>
        <fullName>Aromatase</fullName>
        <ecNumber evidence="2">1.14.14.14</ecNumber>
    </recommendedName>
    <alternativeName>
        <fullName>CYPXIX</fullName>
    </alternativeName>
    <alternativeName>
        <fullName>Cytochrome P-450AROM</fullName>
    </alternativeName>
    <alternativeName>
        <fullName>Cytochrome P450 19A1</fullName>
    </alternativeName>
    <alternativeName>
        <fullName>Estrogen synthase</fullName>
    </alternativeName>
</protein>
<sequence>MAAHVFPMCERTRKPVHFSETVMEILLREARNGTDPRYENPRGITLLLLLCLVLLLTVWNRHEKKCSIPGPSFCLGLGPLMSYCRFIWMGIGTASNYYNEKYGDMVRVWISGEETLVLSRPSAVYHVLKHSQYTSRFGSKLGLQCIGMHEQGIIFNSNVTLWRKVRTYFAKALTGPGLQRTLEICTMSTNTHLDGLSRLTDAQGHVDVLNLLRCIVVDISNRLFLDVPLNEQNLLFKIHRYFETWQTVLIKPDFYFRLKWLHDKHRNAAQELHDAIEDLIEQKRTELQQAEKLDNLNFTEELIFAQSHGELTAENVRQCVLEMVIAAPDTLSISVFFMLLLLKQNAEVERRILTEIHTVLGDTELQHSHLSQLHVLECFINEALRFHPVVDFSYRRALDDDVIEGFRVPRGTNIILNVGRMHRSEFYPKPADFSLDNFNKPVPSRFFQPFGSGPRSCVGKHIAMVMMKAVLLMVLSRFSVCPEESCTVENIAHTNDLSQQPVEDKHTLSVRFIPRNTHTRNRKA</sequence>
<accession>Q92111</accession>